<dbReference type="EC" id="3.1.3.16"/>
<dbReference type="EC" id="3.1.3.48"/>
<dbReference type="EMBL" id="AB164404">
    <property type="protein sequence ID" value="BAD12141.1"/>
    <property type="molecule type" value="mRNA"/>
</dbReference>
<dbReference type="EMBL" id="AK000449">
    <property type="protein sequence ID" value="BAA91172.1"/>
    <property type="molecule type" value="mRNA"/>
</dbReference>
<dbReference type="EMBL" id="AL590560">
    <property type="status" value="NOT_ANNOTATED_CDS"/>
    <property type="molecule type" value="Genomic_DNA"/>
</dbReference>
<dbReference type="EMBL" id="BC001140">
    <property type="protein sequence ID" value="AAH01140.1"/>
    <property type="molecule type" value="mRNA"/>
</dbReference>
<dbReference type="CCDS" id="CCDS1187.1"/>
<dbReference type="RefSeq" id="NP_001306587.1">
    <property type="nucleotide sequence ID" value="NM_001319658.2"/>
</dbReference>
<dbReference type="RefSeq" id="NP_001306588.1">
    <property type="nucleotide sequence ID" value="NM_001319659.2"/>
</dbReference>
<dbReference type="RefSeq" id="NP_060293.2">
    <property type="nucleotide sequence ID" value="NM_017823.5"/>
</dbReference>
<dbReference type="PDB" id="2IMG">
    <property type="method" value="X-ray"/>
    <property type="resolution" value="1.93 A"/>
    <property type="chains" value="A=2-150"/>
</dbReference>
<dbReference type="PDB" id="4ERC">
    <property type="method" value="X-ray"/>
    <property type="resolution" value="1.15 A"/>
    <property type="chains" value="A/B=1-150"/>
</dbReference>
<dbReference type="PDBsum" id="2IMG"/>
<dbReference type="PDBsum" id="4ERC"/>
<dbReference type="SMR" id="Q9BVJ7"/>
<dbReference type="BioGRID" id="120275">
    <property type="interactions" value="119"/>
</dbReference>
<dbReference type="FunCoup" id="Q9BVJ7">
    <property type="interactions" value="417"/>
</dbReference>
<dbReference type="IntAct" id="Q9BVJ7">
    <property type="interactions" value="50"/>
</dbReference>
<dbReference type="MINT" id="Q9BVJ7"/>
<dbReference type="STRING" id="9606.ENSP00000357087"/>
<dbReference type="BindingDB" id="Q9BVJ7"/>
<dbReference type="ChEMBL" id="CHEMBL2396506"/>
<dbReference type="DrugBank" id="DB04214">
    <property type="generic name" value="4-Nitrophenyl Phosphate"/>
</dbReference>
<dbReference type="DEPOD" id="DUSP23"/>
<dbReference type="iPTMnet" id="Q9BVJ7"/>
<dbReference type="PhosphoSitePlus" id="Q9BVJ7"/>
<dbReference type="SwissPalm" id="Q9BVJ7"/>
<dbReference type="BioMuta" id="DUSP23"/>
<dbReference type="DMDM" id="73620828"/>
<dbReference type="jPOST" id="Q9BVJ7"/>
<dbReference type="MassIVE" id="Q9BVJ7"/>
<dbReference type="PaxDb" id="9606-ENSP00000357087"/>
<dbReference type="PeptideAtlas" id="Q9BVJ7"/>
<dbReference type="ProteomicsDB" id="79212"/>
<dbReference type="Pumba" id="Q9BVJ7"/>
<dbReference type="Antibodypedia" id="20475">
    <property type="antibodies" value="182 antibodies from 25 providers"/>
</dbReference>
<dbReference type="DNASU" id="54935"/>
<dbReference type="Ensembl" id="ENST00000368107.2">
    <property type="protein sequence ID" value="ENSP00000357087.1"/>
    <property type="gene ID" value="ENSG00000158716.9"/>
</dbReference>
<dbReference type="Ensembl" id="ENST00000368108.7">
    <property type="protein sequence ID" value="ENSP00000357088.3"/>
    <property type="gene ID" value="ENSG00000158716.9"/>
</dbReference>
<dbReference type="Ensembl" id="ENST00000368109.5">
    <property type="protein sequence ID" value="ENSP00000357089.1"/>
    <property type="gene ID" value="ENSG00000158716.9"/>
</dbReference>
<dbReference type="GeneID" id="54935"/>
<dbReference type="KEGG" id="hsa:54935"/>
<dbReference type="MANE-Select" id="ENST00000368107.2">
    <property type="protein sequence ID" value="ENSP00000357087.1"/>
    <property type="RefSeq nucleotide sequence ID" value="NM_001319658.2"/>
    <property type="RefSeq protein sequence ID" value="NP_001306587.1"/>
</dbReference>
<dbReference type="UCSC" id="uc001ftz.2">
    <property type="organism name" value="human"/>
</dbReference>
<dbReference type="AGR" id="HGNC:21480"/>
<dbReference type="CTD" id="54935"/>
<dbReference type="DisGeNET" id="54935"/>
<dbReference type="GeneCards" id="DUSP23"/>
<dbReference type="HGNC" id="HGNC:21480">
    <property type="gene designation" value="DUSP23"/>
</dbReference>
<dbReference type="HPA" id="ENSG00000158716">
    <property type="expression patterns" value="Low tissue specificity"/>
</dbReference>
<dbReference type="MIM" id="618361">
    <property type="type" value="gene"/>
</dbReference>
<dbReference type="neXtProt" id="NX_Q9BVJ7"/>
<dbReference type="OpenTargets" id="ENSG00000158716"/>
<dbReference type="PharmGKB" id="PA134983082"/>
<dbReference type="VEuPathDB" id="HostDB:ENSG00000158716"/>
<dbReference type="eggNOG" id="KOG1720">
    <property type="taxonomic scope" value="Eukaryota"/>
</dbReference>
<dbReference type="GeneTree" id="ENSGT00940000161329"/>
<dbReference type="HOGENOM" id="CLU_047330_4_2_1"/>
<dbReference type="InParanoid" id="Q9BVJ7"/>
<dbReference type="OMA" id="PAHYQYL"/>
<dbReference type="OrthoDB" id="432447at2759"/>
<dbReference type="PAN-GO" id="Q9BVJ7">
    <property type="GO annotations" value="2 GO annotations based on evolutionary models"/>
</dbReference>
<dbReference type="PhylomeDB" id="Q9BVJ7"/>
<dbReference type="TreeFam" id="TF105125"/>
<dbReference type="BRENDA" id="3.1.3.48">
    <property type="organism ID" value="2681"/>
</dbReference>
<dbReference type="PathwayCommons" id="Q9BVJ7"/>
<dbReference type="SABIO-RK" id="Q9BVJ7"/>
<dbReference type="SignaLink" id="Q9BVJ7"/>
<dbReference type="SIGNOR" id="Q9BVJ7"/>
<dbReference type="BioGRID-ORCS" id="54935">
    <property type="hits" value="6 hits in 1173 CRISPR screens"/>
</dbReference>
<dbReference type="CD-CODE" id="8C2F96ED">
    <property type="entry name" value="Centrosome"/>
</dbReference>
<dbReference type="EvolutionaryTrace" id="Q9BVJ7"/>
<dbReference type="GeneWiki" id="DUSP23"/>
<dbReference type="GenomeRNAi" id="54935"/>
<dbReference type="Pharos" id="Q9BVJ7">
    <property type="development level" value="Tbio"/>
</dbReference>
<dbReference type="PRO" id="PR:Q9BVJ7"/>
<dbReference type="Proteomes" id="UP000005640">
    <property type="component" value="Chromosome 1"/>
</dbReference>
<dbReference type="RNAct" id="Q9BVJ7">
    <property type="molecule type" value="protein"/>
</dbReference>
<dbReference type="Bgee" id="ENSG00000158716">
    <property type="expression patterns" value="Expressed in left adrenal gland cortex and 175 other cell types or tissues"/>
</dbReference>
<dbReference type="ExpressionAtlas" id="Q9BVJ7">
    <property type="expression patterns" value="baseline and differential"/>
</dbReference>
<dbReference type="GO" id="GO:0005737">
    <property type="term" value="C:cytoplasm"/>
    <property type="evidence" value="ECO:0000318"/>
    <property type="project" value="GO_Central"/>
</dbReference>
<dbReference type="GO" id="GO:0005829">
    <property type="term" value="C:cytosol"/>
    <property type="evidence" value="ECO:0007669"/>
    <property type="project" value="UniProtKB-SubCell"/>
</dbReference>
<dbReference type="GO" id="GO:0005654">
    <property type="term" value="C:nucleoplasm"/>
    <property type="evidence" value="ECO:0000314"/>
    <property type="project" value="HPA"/>
</dbReference>
<dbReference type="GO" id="GO:0016791">
    <property type="term" value="F:phosphatase activity"/>
    <property type="evidence" value="ECO:0000314"/>
    <property type="project" value="UniProtKB"/>
</dbReference>
<dbReference type="GO" id="GO:0004722">
    <property type="term" value="F:protein serine/threonine phosphatase activity"/>
    <property type="evidence" value="ECO:0007669"/>
    <property type="project" value="UniProtKB-EC"/>
</dbReference>
<dbReference type="GO" id="GO:0004725">
    <property type="term" value="F:protein tyrosine phosphatase activity"/>
    <property type="evidence" value="ECO:0000318"/>
    <property type="project" value="GO_Central"/>
</dbReference>
<dbReference type="GO" id="GO:0008138">
    <property type="term" value="F:protein tyrosine/serine/threonine phosphatase activity"/>
    <property type="evidence" value="ECO:0000314"/>
    <property type="project" value="UniProtKB"/>
</dbReference>
<dbReference type="GO" id="GO:0060271">
    <property type="term" value="P:cilium assembly"/>
    <property type="evidence" value="ECO:0000318"/>
    <property type="project" value="GO_Central"/>
</dbReference>
<dbReference type="GO" id="GO:0016311">
    <property type="term" value="P:dephosphorylation"/>
    <property type="evidence" value="ECO:0000314"/>
    <property type="project" value="UniProtKB"/>
</dbReference>
<dbReference type="CDD" id="cd14504">
    <property type="entry name" value="DUSP23"/>
    <property type="match status" value="1"/>
</dbReference>
<dbReference type="FunFam" id="3.90.190.10:FF:000063">
    <property type="entry name" value="Dual specificity phosphatase 23"/>
    <property type="match status" value="1"/>
</dbReference>
<dbReference type="Gene3D" id="3.90.190.10">
    <property type="entry name" value="Protein tyrosine phosphatase superfamily"/>
    <property type="match status" value="1"/>
</dbReference>
<dbReference type="InterPro" id="IPR029021">
    <property type="entry name" value="Prot-tyrosine_phosphatase-like"/>
</dbReference>
<dbReference type="InterPro" id="IPR050561">
    <property type="entry name" value="PTP"/>
</dbReference>
<dbReference type="InterPro" id="IPR057023">
    <property type="entry name" value="PTP-SAK"/>
</dbReference>
<dbReference type="InterPro" id="IPR016130">
    <property type="entry name" value="Tyr_Pase_AS"/>
</dbReference>
<dbReference type="InterPro" id="IPR003595">
    <property type="entry name" value="Tyr_Pase_cat"/>
</dbReference>
<dbReference type="InterPro" id="IPR000387">
    <property type="entry name" value="Tyr_Pase_dom"/>
</dbReference>
<dbReference type="InterPro" id="IPR020422">
    <property type="entry name" value="TYR_PHOSPHATASE_DUAL_dom"/>
</dbReference>
<dbReference type="PANTHER" id="PTHR23339">
    <property type="entry name" value="TYROSINE SPECIFIC PROTEIN PHOSPHATASE AND DUAL SPECIFICITY PROTEIN PHOSPHATASE"/>
    <property type="match status" value="1"/>
</dbReference>
<dbReference type="Pfam" id="PF22784">
    <property type="entry name" value="PTP-SAK"/>
    <property type="match status" value="1"/>
</dbReference>
<dbReference type="SMART" id="SM00195">
    <property type="entry name" value="DSPc"/>
    <property type="match status" value="1"/>
</dbReference>
<dbReference type="SMART" id="SM00404">
    <property type="entry name" value="PTPc_motif"/>
    <property type="match status" value="1"/>
</dbReference>
<dbReference type="SUPFAM" id="SSF52799">
    <property type="entry name" value="(Phosphotyrosine protein) phosphatases II"/>
    <property type="match status" value="1"/>
</dbReference>
<dbReference type="PROSITE" id="PS00383">
    <property type="entry name" value="TYR_PHOSPHATASE_1"/>
    <property type="match status" value="1"/>
</dbReference>
<dbReference type="PROSITE" id="PS50056">
    <property type="entry name" value="TYR_PHOSPHATASE_2"/>
    <property type="match status" value="1"/>
</dbReference>
<dbReference type="PROSITE" id="PS50054">
    <property type="entry name" value="TYR_PHOSPHATASE_DUAL"/>
    <property type="match status" value="1"/>
</dbReference>
<keyword id="KW-0002">3D-structure</keyword>
<keyword id="KW-0963">Cytoplasm</keyword>
<keyword id="KW-0378">Hydrolase</keyword>
<keyword id="KW-0539">Nucleus</keyword>
<keyword id="KW-0904">Protein phosphatase</keyword>
<keyword id="KW-1267">Proteomics identification</keyword>
<keyword id="KW-1185">Reference proteome</keyword>
<comment type="function">
    <text evidence="3 4">Protein phosphatase that mediates dephosphorylation of proteins phosphorylated on Tyr and Ser/Thr residues. In vitro, it can dephosphorylate p44-ERK1 (MAPK3) but not p54 SAPK-beta (MAPK10) in vitro. Able to enhance activation of JNK and p38 (MAPK14).</text>
</comment>
<comment type="catalytic activity">
    <reaction evidence="2">
        <text>O-phospho-L-tyrosyl-[protein] + H2O = L-tyrosyl-[protein] + phosphate</text>
        <dbReference type="Rhea" id="RHEA:10684"/>
        <dbReference type="Rhea" id="RHEA-COMP:10136"/>
        <dbReference type="Rhea" id="RHEA-COMP:20101"/>
        <dbReference type="ChEBI" id="CHEBI:15377"/>
        <dbReference type="ChEBI" id="CHEBI:43474"/>
        <dbReference type="ChEBI" id="CHEBI:46858"/>
        <dbReference type="ChEBI" id="CHEBI:61978"/>
        <dbReference type="EC" id="3.1.3.48"/>
    </reaction>
</comment>
<comment type="catalytic activity">
    <reaction>
        <text>O-phospho-L-seryl-[protein] + H2O = L-seryl-[protein] + phosphate</text>
        <dbReference type="Rhea" id="RHEA:20629"/>
        <dbReference type="Rhea" id="RHEA-COMP:9863"/>
        <dbReference type="Rhea" id="RHEA-COMP:11604"/>
        <dbReference type="ChEBI" id="CHEBI:15377"/>
        <dbReference type="ChEBI" id="CHEBI:29999"/>
        <dbReference type="ChEBI" id="CHEBI:43474"/>
        <dbReference type="ChEBI" id="CHEBI:83421"/>
        <dbReference type="EC" id="3.1.3.16"/>
    </reaction>
</comment>
<comment type="catalytic activity">
    <reaction>
        <text>O-phospho-L-threonyl-[protein] + H2O = L-threonyl-[protein] + phosphate</text>
        <dbReference type="Rhea" id="RHEA:47004"/>
        <dbReference type="Rhea" id="RHEA-COMP:11060"/>
        <dbReference type="Rhea" id="RHEA-COMP:11605"/>
        <dbReference type="ChEBI" id="CHEBI:15377"/>
        <dbReference type="ChEBI" id="CHEBI:30013"/>
        <dbReference type="ChEBI" id="CHEBI:43474"/>
        <dbReference type="ChEBI" id="CHEBI:61977"/>
        <dbReference type="EC" id="3.1.3.16"/>
    </reaction>
</comment>
<comment type="biophysicochemical properties">
    <kinetics>
        <KM evidence="4">1.498 mM for p-nitrophenylphosphate</KM>
    </kinetics>
</comment>
<comment type="interaction">
    <interactant intactId="EBI-724940">
        <id>Q9BVJ7</id>
    </interactant>
    <interactant intactId="EBI-6425205">
        <id>Q9NWX5</id>
        <label>ASB6</label>
    </interactant>
    <organismsDiffer>false</organismsDiffer>
    <experiments>3</experiments>
</comment>
<comment type="interaction">
    <interactant intactId="EBI-724940">
        <id>Q9BVJ7</id>
    </interactant>
    <interactant intactId="EBI-11977289">
        <id>Q9H503-2</id>
        <label>BANF2</label>
    </interactant>
    <organismsDiffer>false</organismsDiffer>
    <experiments>3</experiments>
</comment>
<comment type="interaction">
    <interactant intactId="EBI-724940">
        <id>Q9BVJ7</id>
    </interactant>
    <interactant intactId="EBI-742054">
        <id>Q96D03</id>
        <label>DDIT4L</label>
    </interactant>
    <organismsDiffer>false</organismsDiffer>
    <experiments>3</experiments>
</comment>
<comment type="interaction">
    <interactant intactId="EBI-724940">
        <id>Q9BVJ7</id>
    </interactant>
    <interactant intactId="EBI-371922">
        <id>Q96B26</id>
        <label>EXOSC8</label>
    </interactant>
    <organismsDiffer>false</organismsDiffer>
    <experiments>12</experiments>
</comment>
<comment type="interaction">
    <interactant intactId="EBI-724940">
        <id>Q9BVJ7</id>
    </interactant>
    <interactant intactId="EBI-2857471">
        <id>Q6NTE8</id>
        <label>MRNIP</label>
    </interactant>
    <organismsDiffer>false</organismsDiffer>
    <experiments>3</experiments>
</comment>
<comment type="interaction">
    <interactant intactId="EBI-724940">
        <id>Q9BVJ7</id>
    </interactant>
    <interactant intactId="EBI-740897">
        <id>Q9GZT8</id>
        <label>NIF3L1</label>
    </interactant>
    <organismsDiffer>false</organismsDiffer>
    <experiments>3</experiments>
</comment>
<comment type="interaction">
    <interactant intactId="EBI-724940">
        <id>Q9BVJ7</id>
    </interactant>
    <interactant intactId="EBI-372312">
        <id>P28062-2</id>
        <label>PSMB8</label>
    </interactant>
    <organismsDiffer>false</organismsDiffer>
    <experiments>5</experiments>
</comment>
<comment type="interaction">
    <interactant intactId="EBI-724940">
        <id>Q9BVJ7</id>
    </interactant>
    <interactant intactId="EBI-741630">
        <id>Q9UL46</id>
        <label>PSME2</label>
    </interactant>
    <organismsDiffer>false</organismsDiffer>
    <experiments>3</experiments>
</comment>
<comment type="interaction">
    <interactant intactId="EBI-724940">
        <id>Q9BVJ7</id>
    </interactant>
    <interactant intactId="EBI-13636688">
        <id>P15884-3</id>
        <label>TCF4</label>
    </interactant>
    <organismsDiffer>false</organismsDiffer>
    <experiments>3</experiments>
</comment>
<comment type="interaction">
    <interactant intactId="EBI-724940">
        <id>Q9BVJ7</id>
    </interactant>
    <interactant intactId="EBI-717567">
        <id>Q8TBC4</id>
        <label>UBA3</label>
    </interactant>
    <organismsDiffer>false</organismsDiffer>
    <experiments>3</experiments>
</comment>
<comment type="subcellular location">
    <subcellularLocation>
        <location>Cytoplasm</location>
        <location>Cytosol</location>
    </subcellularLocation>
    <subcellularLocation>
        <location>Nucleus</location>
    </subcellularLocation>
    <text>Mainly cytosolic. Also nuclear.</text>
</comment>
<comment type="tissue specificity">
    <text evidence="3 4">Widely expressed. Highly expressed in spleen, prostate, colon, adrenal gland, mammary gland, thyroid and trachea. Expressed at lower level in uterus, small intestine, bladder, bone marrow, brain, spinal cord and stomach.</text>
</comment>
<comment type="similarity">
    <text evidence="5">Belongs to the protein-tyrosine phosphatase family. Non-receptor class dual specificity subfamily.</text>
</comment>
<comment type="caution">
    <text evidence="5">Was originally erroneously termed DUSP25.</text>
</comment>
<accession>Q9BVJ7</accession>
<accession>Q9NX48</accession>
<evidence type="ECO:0000255" key="1">
    <source>
        <dbReference type="PROSITE-ProRule" id="PRU00160"/>
    </source>
</evidence>
<evidence type="ECO:0000255" key="2">
    <source>
        <dbReference type="PROSITE-ProRule" id="PRU10044"/>
    </source>
</evidence>
<evidence type="ECO:0000269" key="3">
    <source>
    </source>
</evidence>
<evidence type="ECO:0000269" key="4">
    <source>
    </source>
</evidence>
<evidence type="ECO:0000305" key="5"/>
<evidence type="ECO:0007744" key="6">
    <source>
    </source>
</evidence>
<evidence type="ECO:0007829" key="7">
    <source>
        <dbReference type="PDB" id="4ERC"/>
    </source>
</evidence>
<organism>
    <name type="scientific">Homo sapiens</name>
    <name type="common">Human</name>
    <dbReference type="NCBI Taxonomy" id="9606"/>
    <lineage>
        <taxon>Eukaryota</taxon>
        <taxon>Metazoa</taxon>
        <taxon>Chordata</taxon>
        <taxon>Craniata</taxon>
        <taxon>Vertebrata</taxon>
        <taxon>Euteleostomi</taxon>
        <taxon>Mammalia</taxon>
        <taxon>Eutheria</taxon>
        <taxon>Euarchontoglires</taxon>
        <taxon>Primates</taxon>
        <taxon>Haplorrhini</taxon>
        <taxon>Catarrhini</taxon>
        <taxon>Hominidae</taxon>
        <taxon>Homo</taxon>
    </lineage>
</organism>
<sequence>MGVQPPNFSWVLPGRLAGLALPRLPAHYQFLLDLGVRHLVSLTERGPPHSDSCPGLTLHRLRIPDFCPPAPDQIDRFVQIVDEANARGEAVGVHCALGFGRTGTMLACYLVKERGLAAGDAIAEIRRLRPGSIETYEQEKAVFQFYQRTK</sequence>
<proteinExistence type="evidence at protein level"/>
<name>DUS23_HUMAN</name>
<gene>
    <name type="primary">DUSP23</name>
    <name type="synonym">LDP3</name>
    <name type="synonym">VHZ</name>
</gene>
<feature type="initiator methionine" description="Removed" evidence="6">
    <location>
        <position position="1"/>
    </location>
</feature>
<feature type="chain" id="PRO_0000094835" description="Dual specificity protein phosphatase 23">
    <location>
        <begin position="2"/>
        <end position="150"/>
    </location>
</feature>
<feature type="domain" description="Tyrosine-protein phosphatase" evidence="1">
    <location>
        <begin position="7"/>
        <end position="150"/>
    </location>
</feature>
<feature type="active site" description="Phosphocysteine intermediate" evidence="1">
    <location>
        <position position="95"/>
    </location>
</feature>
<feature type="sequence variant" id="VAR_051756" description="In dbSNP:rs11544443.">
    <original>E</original>
    <variation>V</variation>
    <location>
        <position position="124"/>
    </location>
</feature>
<feature type="sequence variant" id="VAR_023199" description="In dbSNP:rs1129923.">
    <original>G</original>
    <variation>S</variation>
    <location>
        <position position="131"/>
    </location>
</feature>
<feature type="sequence conflict" description="In Ref. 2; BAA91172." evidence="5" ref="2">
    <original>S</original>
    <variation>P</variation>
    <location>
        <position position="132"/>
    </location>
</feature>
<feature type="strand" evidence="7">
    <location>
        <begin position="9"/>
        <end position="12"/>
    </location>
</feature>
<feature type="turn" evidence="7">
    <location>
        <begin position="13"/>
        <end position="15"/>
    </location>
</feature>
<feature type="strand" evidence="7">
    <location>
        <begin position="16"/>
        <end position="20"/>
    </location>
</feature>
<feature type="helix" evidence="7">
    <location>
        <begin position="25"/>
        <end position="33"/>
    </location>
</feature>
<feature type="strand" evidence="7">
    <location>
        <begin position="36"/>
        <end position="41"/>
    </location>
</feature>
<feature type="strand" evidence="7">
    <location>
        <begin position="43"/>
        <end position="45"/>
    </location>
</feature>
<feature type="helix" evidence="7">
    <location>
        <begin position="50"/>
        <end position="52"/>
    </location>
</feature>
<feature type="strand" evidence="7">
    <location>
        <begin position="56"/>
        <end position="60"/>
    </location>
</feature>
<feature type="helix" evidence="7">
    <location>
        <begin position="71"/>
        <end position="86"/>
    </location>
</feature>
<feature type="strand" evidence="7">
    <location>
        <begin position="90"/>
        <end position="94"/>
    </location>
</feature>
<feature type="strand" evidence="7">
    <location>
        <begin position="96"/>
        <end position="99"/>
    </location>
</feature>
<feature type="helix" evidence="7">
    <location>
        <begin position="100"/>
        <end position="114"/>
    </location>
</feature>
<feature type="helix" evidence="7">
    <location>
        <begin position="118"/>
        <end position="128"/>
    </location>
</feature>
<feature type="helix" evidence="7">
    <location>
        <begin position="136"/>
        <end position="149"/>
    </location>
</feature>
<reference key="1">
    <citation type="journal article" date="2004" name="Biochem. J.">
        <title>Characterization of a novel low-molecular-mass dual-specificity phosphatase-3 (LDP-3) that enhances activation of JNK and p38.</title>
        <authorList>
            <person name="Takagaki K."/>
            <person name="Satoh T."/>
            <person name="Tanuma N."/>
            <person name="Masuda K."/>
            <person name="Takekawa M."/>
            <person name="Shima H."/>
            <person name="Kikuchi K."/>
        </authorList>
    </citation>
    <scope>NUCLEOTIDE SEQUENCE [MRNA]</scope>
</reference>
<reference key="2">
    <citation type="journal article" date="2004" name="Nat. Genet.">
        <title>Complete sequencing and characterization of 21,243 full-length human cDNAs.</title>
        <authorList>
            <person name="Ota T."/>
            <person name="Suzuki Y."/>
            <person name="Nishikawa T."/>
            <person name="Otsuki T."/>
            <person name="Sugiyama T."/>
            <person name="Irie R."/>
            <person name="Wakamatsu A."/>
            <person name="Hayashi K."/>
            <person name="Sato H."/>
            <person name="Nagai K."/>
            <person name="Kimura K."/>
            <person name="Makita H."/>
            <person name="Sekine M."/>
            <person name="Obayashi M."/>
            <person name="Nishi T."/>
            <person name="Shibahara T."/>
            <person name="Tanaka T."/>
            <person name="Ishii S."/>
            <person name="Yamamoto J."/>
            <person name="Saito K."/>
            <person name="Kawai Y."/>
            <person name="Isono Y."/>
            <person name="Nakamura Y."/>
            <person name="Nagahari K."/>
            <person name="Murakami K."/>
            <person name="Yasuda T."/>
            <person name="Iwayanagi T."/>
            <person name="Wagatsuma M."/>
            <person name="Shiratori A."/>
            <person name="Sudo H."/>
            <person name="Hosoiri T."/>
            <person name="Kaku Y."/>
            <person name="Kodaira H."/>
            <person name="Kondo H."/>
            <person name="Sugawara M."/>
            <person name="Takahashi M."/>
            <person name="Kanda K."/>
            <person name="Yokoi T."/>
            <person name="Furuya T."/>
            <person name="Kikkawa E."/>
            <person name="Omura Y."/>
            <person name="Abe K."/>
            <person name="Kamihara K."/>
            <person name="Katsuta N."/>
            <person name="Sato K."/>
            <person name="Tanikawa M."/>
            <person name="Yamazaki M."/>
            <person name="Ninomiya K."/>
            <person name="Ishibashi T."/>
            <person name="Yamashita H."/>
            <person name="Murakawa K."/>
            <person name="Fujimori K."/>
            <person name="Tanai H."/>
            <person name="Kimata M."/>
            <person name="Watanabe M."/>
            <person name="Hiraoka S."/>
            <person name="Chiba Y."/>
            <person name="Ishida S."/>
            <person name="Ono Y."/>
            <person name="Takiguchi S."/>
            <person name="Watanabe S."/>
            <person name="Yosida M."/>
            <person name="Hotuta T."/>
            <person name="Kusano J."/>
            <person name="Kanehori K."/>
            <person name="Takahashi-Fujii A."/>
            <person name="Hara H."/>
            <person name="Tanase T.-O."/>
            <person name="Nomura Y."/>
            <person name="Togiya S."/>
            <person name="Komai F."/>
            <person name="Hara R."/>
            <person name="Takeuchi K."/>
            <person name="Arita M."/>
            <person name="Imose N."/>
            <person name="Musashino K."/>
            <person name="Yuuki H."/>
            <person name="Oshima A."/>
            <person name="Sasaki N."/>
            <person name="Aotsuka S."/>
            <person name="Yoshikawa Y."/>
            <person name="Matsunawa H."/>
            <person name="Ichihara T."/>
            <person name="Shiohata N."/>
            <person name="Sano S."/>
            <person name="Moriya S."/>
            <person name="Momiyama H."/>
            <person name="Satoh N."/>
            <person name="Takami S."/>
            <person name="Terashima Y."/>
            <person name="Suzuki O."/>
            <person name="Nakagawa S."/>
            <person name="Senoh A."/>
            <person name="Mizoguchi H."/>
            <person name="Goto Y."/>
            <person name="Shimizu F."/>
            <person name="Wakebe H."/>
            <person name="Hishigaki H."/>
            <person name="Watanabe T."/>
            <person name="Sugiyama A."/>
            <person name="Takemoto M."/>
            <person name="Kawakami B."/>
            <person name="Yamazaki M."/>
            <person name="Watanabe K."/>
            <person name="Kumagai A."/>
            <person name="Itakura S."/>
            <person name="Fukuzumi Y."/>
            <person name="Fujimori Y."/>
            <person name="Komiyama M."/>
            <person name="Tashiro H."/>
            <person name="Tanigami A."/>
            <person name="Fujiwara T."/>
            <person name="Ono T."/>
            <person name="Yamada K."/>
            <person name="Fujii Y."/>
            <person name="Ozaki K."/>
            <person name="Hirao M."/>
            <person name="Ohmori Y."/>
            <person name="Kawabata A."/>
            <person name="Hikiji T."/>
            <person name="Kobatake N."/>
            <person name="Inagaki H."/>
            <person name="Ikema Y."/>
            <person name="Okamoto S."/>
            <person name="Okitani R."/>
            <person name="Kawakami T."/>
            <person name="Noguchi S."/>
            <person name="Itoh T."/>
            <person name="Shigeta K."/>
            <person name="Senba T."/>
            <person name="Matsumura K."/>
            <person name="Nakajima Y."/>
            <person name="Mizuno T."/>
            <person name="Morinaga M."/>
            <person name="Sasaki M."/>
            <person name="Togashi T."/>
            <person name="Oyama M."/>
            <person name="Hata H."/>
            <person name="Watanabe M."/>
            <person name="Komatsu T."/>
            <person name="Mizushima-Sugano J."/>
            <person name="Satoh T."/>
            <person name="Shirai Y."/>
            <person name="Takahashi Y."/>
            <person name="Nakagawa K."/>
            <person name="Okumura K."/>
            <person name="Nagase T."/>
            <person name="Nomura N."/>
            <person name="Kikuchi H."/>
            <person name="Masuho Y."/>
            <person name="Yamashita R."/>
            <person name="Nakai K."/>
            <person name="Yada T."/>
            <person name="Nakamura Y."/>
            <person name="Ohara O."/>
            <person name="Isogai T."/>
            <person name="Sugano S."/>
        </authorList>
    </citation>
    <scope>NUCLEOTIDE SEQUENCE [LARGE SCALE MRNA]</scope>
    <source>
        <tissue>Carcinoma</tissue>
    </source>
</reference>
<reference key="3">
    <citation type="journal article" date="2006" name="Nature">
        <title>The DNA sequence and biological annotation of human chromosome 1.</title>
        <authorList>
            <person name="Gregory S.G."/>
            <person name="Barlow K.F."/>
            <person name="McLay K.E."/>
            <person name="Kaul R."/>
            <person name="Swarbreck D."/>
            <person name="Dunham A."/>
            <person name="Scott C.E."/>
            <person name="Howe K.L."/>
            <person name="Woodfine K."/>
            <person name="Spencer C.C.A."/>
            <person name="Jones M.C."/>
            <person name="Gillson C."/>
            <person name="Searle S."/>
            <person name="Zhou Y."/>
            <person name="Kokocinski F."/>
            <person name="McDonald L."/>
            <person name="Evans R."/>
            <person name="Phillips K."/>
            <person name="Atkinson A."/>
            <person name="Cooper R."/>
            <person name="Jones C."/>
            <person name="Hall R.E."/>
            <person name="Andrews T.D."/>
            <person name="Lloyd C."/>
            <person name="Ainscough R."/>
            <person name="Almeida J.P."/>
            <person name="Ambrose K.D."/>
            <person name="Anderson F."/>
            <person name="Andrew R.W."/>
            <person name="Ashwell R.I.S."/>
            <person name="Aubin K."/>
            <person name="Babbage A.K."/>
            <person name="Bagguley C.L."/>
            <person name="Bailey J."/>
            <person name="Beasley H."/>
            <person name="Bethel G."/>
            <person name="Bird C.P."/>
            <person name="Bray-Allen S."/>
            <person name="Brown J.Y."/>
            <person name="Brown A.J."/>
            <person name="Buckley D."/>
            <person name="Burton J."/>
            <person name="Bye J."/>
            <person name="Carder C."/>
            <person name="Chapman J.C."/>
            <person name="Clark S.Y."/>
            <person name="Clarke G."/>
            <person name="Clee C."/>
            <person name="Cobley V."/>
            <person name="Collier R.E."/>
            <person name="Corby N."/>
            <person name="Coville G.J."/>
            <person name="Davies J."/>
            <person name="Deadman R."/>
            <person name="Dunn M."/>
            <person name="Earthrowl M."/>
            <person name="Ellington A.G."/>
            <person name="Errington H."/>
            <person name="Frankish A."/>
            <person name="Frankland J."/>
            <person name="French L."/>
            <person name="Garner P."/>
            <person name="Garnett J."/>
            <person name="Gay L."/>
            <person name="Ghori M.R.J."/>
            <person name="Gibson R."/>
            <person name="Gilby L.M."/>
            <person name="Gillett W."/>
            <person name="Glithero R.J."/>
            <person name="Grafham D.V."/>
            <person name="Griffiths C."/>
            <person name="Griffiths-Jones S."/>
            <person name="Grocock R."/>
            <person name="Hammond S."/>
            <person name="Harrison E.S.I."/>
            <person name="Hart E."/>
            <person name="Haugen E."/>
            <person name="Heath P.D."/>
            <person name="Holmes S."/>
            <person name="Holt K."/>
            <person name="Howden P.J."/>
            <person name="Hunt A.R."/>
            <person name="Hunt S.E."/>
            <person name="Hunter G."/>
            <person name="Isherwood J."/>
            <person name="James R."/>
            <person name="Johnson C."/>
            <person name="Johnson D."/>
            <person name="Joy A."/>
            <person name="Kay M."/>
            <person name="Kershaw J.K."/>
            <person name="Kibukawa M."/>
            <person name="Kimberley A.M."/>
            <person name="King A."/>
            <person name="Knights A.J."/>
            <person name="Lad H."/>
            <person name="Laird G."/>
            <person name="Lawlor S."/>
            <person name="Leongamornlert D.A."/>
            <person name="Lloyd D.M."/>
            <person name="Loveland J."/>
            <person name="Lovell J."/>
            <person name="Lush M.J."/>
            <person name="Lyne R."/>
            <person name="Martin S."/>
            <person name="Mashreghi-Mohammadi M."/>
            <person name="Matthews L."/>
            <person name="Matthews N.S.W."/>
            <person name="McLaren S."/>
            <person name="Milne S."/>
            <person name="Mistry S."/>
            <person name="Moore M.J.F."/>
            <person name="Nickerson T."/>
            <person name="O'Dell C.N."/>
            <person name="Oliver K."/>
            <person name="Palmeiri A."/>
            <person name="Palmer S.A."/>
            <person name="Parker A."/>
            <person name="Patel D."/>
            <person name="Pearce A.V."/>
            <person name="Peck A.I."/>
            <person name="Pelan S."/>
            <person name="Phelps K."/>
            <person name="Phillimore B.J."/>
            <person name="Plumb R."/>
            <person name="Rajan J."/>
            <person name="Raymond C."/>
            <person name="Rouse G."/>
            <person name="Saenphimmachak C."/>
            <person name="Sehra H.K."/>
            <person name="Sheridan E."/>
            <person name="Shownkeen R."/>
            <person name="Sims S."/>
            <person name="Skuce C.D."/>
            <person name="Smith M."/>
            <person name="Steward C."/>
            <person name="Subramanian S."/>
            <person name="Sycamore N."/>
            <person name="Tracey A."/>
            <person name="Tromans A."/>
            <person name="Van Helmond Z."/>
            <person name="Wall M."/>
            <person name="Wallis J.M."/>
            <person name="White S."/>
            <person name="Whitehead S.L."/>
            <person name="Wilkinson J.E."/>
            <person name="Willey D.L."/>
            <person name="Williams H."/>
            <person name="Wilming L."/>
            <person name="Wray P.W."/>
            <person name="Wu Z."/>
            <person name="Coulson A."/>
            <person name="Vaudin M."/>
            <person name="Sulston J.E."/>
            <person name="Durbin R.M."/>
            <person name="Hubbard T."/>
            <person name="Wooster R."/>
            <person name="Dunham I."/>
            <person name="Carter N.P."/>
            <person name="McVean G."/>
            <person name="Ross M.T."/>
            <person name="Harrow J."/>
            <person name="Olson M.V."/>
            <person name="Beck S."/>
            <person name="Rogers J."/>
            <person name="Bentley D.R."/>
        </authorList>
    </citation>
    <scope>NUCLEOTIDE SEQUENCE [LARGE SCALE GENOMIC DNA]</scope>
</reference>
<reference key="4">
    <citation type="journal article" date="2004" name="Genome Res.">
        <title>The status, quality, and expansion of the NIH full-length cDNA project: the Mammalian Gene Collection (MGC).</title>
        <authorList>
            <consortium name="The MGC Project Team"/>
        </authorList>
    </citation>
    <scope>NUCLEOTIDE SEQUENCE [LARGE SCALE MRNA]</scope>
    <source>
        <tissue>Lung</tissue>
    </source>
</reference>
<reference key="5">
    <citation type="journal article" date="2004" name="J. Biol. Chem.">
        <title>The minimal essential core of a cysteine-based protein-tyrosine phosphatase revealed by a novel 16-kDa VH1-like phosphatase, VHZ.</title>
        <authorList>
            <person name="Alonso A."/>
            <person name="Burkhalter S."/>
            <person name="Sasin J."/>
            <person name="Tautz L."/>
            <person name="Bogetz J."/>
            <person name="Huynh H."/>
            <person name="Bremer M.C.D."/>
            <person name="Holsinger L.J."/>
            <person name="Godzik A."/>
            <person name="Mustelin T."/>
        </authorList>
    </citation>
    <scope>ENZYME ACTIVITY</scope>
    <scope>FUNCTION</scope>
    <scope>BIOPHYSICOCHEMICAL PROPERTIES</scope>
    <scope>SUBCELLULAR LOCATION</scope>
    <scope>TISSUE SPECIFICITY</scope>
</reference>
<reference key="6">
    <citation type="journal article" date="2004" name="Int. J. Biochem. Cell Biol.">
        <title>Molecular cloning and characterization of a novel dual-specificity phosphatase 23 gene from human fetal brain.</title>
        <authorList>
            <person name="Wu Q."/>
            <person name="Li Y."/>
            <person name="Gu S."/>
            <person name="Li N."/>
            <person name="Zheng D."/>
            <person name="Li D."/>
            <person name="Zheng Z."/>
            <person name="Ji C."/>
            <person name="Xie Y."/>
            <person name="Mao Y."/>
        </authorList>
    </citation>
    <scope>ENZYME ACTIVITY</scope>
    <scope>FUNCTION</scope>
    <scope>SUBCELLULAR LOCATION</scope>
    <scope>TISSUE SPECIFICITY</scope>
</reference>
<reference key="7">
    <citation type="journal article" date="2011" name="BMC Syst. Biol.">
        <title>Initial characterization of the human central proteome.</title>
        <authorList>
            <person name="Burkard T.R."/>
            <person name="Planyavsky M."/>
            <person name="Kaupe I."/>
            <person name="Breitwieser F.P."/>
            <person name="Buerckstuemmer T."/>
            <person name="Bennett K.L."/>
            <person name="Superti-Furga G."/>
            <person name="Colinge J."/>
        </authorList>
    </citation>
    <scope>IDENTIFICATION BY MASS SPECTROMETRY [LARGE SCALE ANALYSIS]</scope>
</reference>
<reference key="8">
    <citation type="journal article" date="2015" name="Proteomics">
        <title>N-terminome analysis of the human mitochondrial proteome.</title>
        <authorList>
            <person name="Vaca Jacome A.S."/>
            <person name="Rabilloud T."/>
            <person name="Schaeffer-Reiss C."/>
            <person name="Rompais M."/>
            <person name="Ayoub D."/>
            <person name="Lane L."/>
            <person name="Bairoch A."/>
            <person name="Van Dorsselaer A."/>
            <person name="Carapito C."/>
        </authorList>
    </citation>
    <scope>CLEAVAGE OF INITIATOR METHIONINE [LARGE SCALE ANALYSIS]</scope>
    <scope>IDENTIFICATION BY MASS SPECTROMETRY [LARGE SCALE ANALYSIS]</scope>
</reference>
<reference key="9">
    <citation type="journal article" date="2008" name="J. Biol. Chem.">
        <title>Structure of human dual specificity protein phosphatase 23, VHZ, enzyme-substrate/product complex.</title>
        <authorList>
            <person name="Agarwal R."/>
            <person name="Burley S.K."/>
            <person name="Swaminathan S."/>
        </authorList>
    </citation>
    <scope>X-RAY CRYSTALLOGRAPHY (1.93 ANGSTROMS) OF 2-150</scope>
</reference>
<protein>
    <recommendedName>
        <fullName>Dual specificity protein phosphatase 23</fullName>
        <ecNumber>3.1.3.16</ecNumber>
        <ecNumber>3.1.3.48</ecNumber>
    </recommendedName>
    <alternativeName>
        <fullName>Low molecular mass dual specificity phosphatase 3</fullName>
        <shortName>LDP-3</shortName>
    </alternativeName>
    <alternativeName>
        <fullName>VH1-like phosphatase Z</fullName>
    </alternativeName>
</protein>